<proteinExistence type="evidence at protein level"/>
<comment type="function">
    <text evidence="5 9">Hydrolyzes the polyglutamate sidechains of pteroylpolyglutamates. Progressively removes gamma-glutamyl residues from pteroylpoly-gamma-glutamate to yield pteroyl-alpha-glutamate (folic acid) and free glutamate (PubMed:11005824, PubMed:8816764). May play an important role in the bioavailability of dietary pteroylpolyglutamates and in the metabolism of pteroylpolyglutamates and antifolates.</text>
</comment>
<comment type="catalytic activity">
    <reaction evidence="5">
        <text>(6S)-5,6,7,8-tetrahydrofolyl-(gamma-L-Glu)(n) + (n-1) H2O = (6S)-5,6,7,8-tetrahydrofolate + (n-1) L-glutamate</text>
        <dbReference type="Rhea" id="RHEA:56784"/>
        <dbReference type="Rhea" id="RHEA-COMP:14738"/>
        <dbReference type="ChEBI" id="CHEBI:15377"/>
        <dbReference type="ChEBI" id="CHEBI:29985"/>
        <dbReference type="ChEBI" id="CHEBI:57453"/>
        <dbReference type="ChEBI" id="CHEBI:141005"/>
        <dbReference type="EC" id="3.4.19.9"/>
    </reaction>
    <physiologicalReaction direction="left-to-right" evidence="11">
        <dbReference type="Rhea" id="RHEA:56785"/>
    </physiologicalReaction>
</comment>
<comment type="biophysicochemical properties">
    <kinetics>
        <KM evidence="5">29.45 uM for of tetrahydrofolate-Glu2</KM>
    </kinetics>
</comment>
<comment type="subunit">
    <text evidence="6 8">Homodimer.</text>
</comment>
<comment type="interaction">
    <interactant intactId="EBI-3045534">
        <id>Q92820</id>
    </interactant>
    <interactant intactId="EBI-744081">
        <id>Q96EQ0</id>
        <label>SGTB</label>
    </interactant>
    <organismsDiffer>false</organismsDiffer>
    <experiments>3</experiments>
</comment>
<comment type="subcellular location">
    <subcellularLocation>
        <location evidence="10">Secreted</location>
        <location evidence="10">Extracellular space</location>
    </subcellularLocation>
    <subcellularLocation>
        <location evidence="7">Lysosome</location>
    </subcellularLocation>
    <subcellularLocation>
        <location evidence="7">Melanosome</location>
    </subcellularLocation>
    <text evidence="7">While its intracellular location is primarily the lysosome, most of the enzyme activity is secreted. Identified by mass spectrometry in melanosome fractions from stage I to stage IV.</text>
</comment>
<comment type="similarity">
    <text evidence="10">Belongs to the peptidase C26 family.</text>
</comment>
<comment type="online information" name="Atlas of Genetics and Cytogenetics in Oncology and Haematology">
    <link uri="https://atlasgeneticsoncology.org/gene/44358/GGH"/>
</comment>
<keyword id="KW-0002">3D-structure</keyword>
<keyword id="KW-0325">Glycoprotein</keyword>
<keyword id="KW-0378">Hydrolase</keyword>
<keyword id="KW-0458">Lysosome</keyword>
<keyword id="KW-1267">Proteomics identification</keyword>
<keyword id="KW-1185">Reference proteome</keyword>
<keyword id="KW-0964">Secreted</keyword>
<keyword id="KW-0732">Signal</keyword>
<accession>Q92820</accession>
<feature type="signal peptide" evidence="1">
    <location>
        <begin position="1"/>
        <end position="24"/>
    </location>
</feature>
<feature type="chain" id="PRO_0000026539" description="Gamma-glutamyl hydrolase">
    <location>
        <begin position="25"/>
        <end position="318"/>
    </location>
</feature>
<feature type="domain" description="Gamma-glutamyl hydrolase" evidence="3">
    <location>
        <begin position="25"/>
        <end position="318"/>
    </location>
</feature>
<feature type="active site" description="Nucleophile">
    <location>
        <position position="134"/>
    </location>
</feature>
<feature type="active site" description="Proton donor">
    <location>
        <position position="244"/>
    </location>
</feature>
<feature type="glycosylation site" description="N-linked (GlcNAc...) asparagine" evidence="2">
    <location>
        <position position="116"/>
    </location>
</feature>
<feature type="glycosylation site" description="N-linked (GlcNAc...) asparagine" evidence="6">
    <location>
        <position position="163"/>
    </location>
</feature>
<feature type="glycosylation site" description="N-linked (GlcNAc...) asparagine" evidence="6">
    <location>
        <position position="203"/>
    </location>
</feature>
<feature type="glycosylation site" description="N-linked (GlcNAc...) asparagine; partial" evidence="6">
    <location>
        <position position="307"/>
    </location>
</feature>
<feature type="sequence variant" id="VAR_014697" description="In dbSNP:rs1800909.">
    <original>C</original>
    <variation>R</variation>
    <location>
        <position position="6"/>
    </location>
</feature>
<feature type="sequence variant" id="VAR_029230" description="In dbSNP:rs11545077.">
    <original>A</original>
    <variation>T</variation>
    <location>
        <position position="31"/>
    </location>
</feature>
<feature type="sequence variant" id="VAR_029231" description="In dbSNP:rs11545078.">
    <original>T</original>
    <variation>I</variation>
    <location>
        <position position="151"/>
    </location>
</feature>
<feature type="mutagenesis site" description="Loss of activity." evidence="4 5">
    <original>C</original>
    <variation>A</variation>
    <location>
        <position position="134"/>
    </location>
</feature>
<feature type="mutagenesis site" description="Reduces activity 250-fold.">
    <original>H</original>
    <variation>N</variation>
    <location>
        <position position="195"/>
    </location>
</feature>
<feature type="mutagenesis site" description="Loss of activity." evidence="5">
    <original>H</original>
    <variation>A</variation>
    <location>
        <position position="244"/>
    </location>
</feature>
<feature type="mutagenesis site" description="Slightly reduced catalytic activity." evidence="5">
    <original>E</original>
    <variation>A</variation>
    <location>
        <position position="246"/>
    </location>
</feature>
<feature type="strand" evidence="13">
    <location>
        <begin position="35"/>
        <end position="39"/>
    </location>
</feature>
<feature type="helix" evidence="13">
    <location>
        <begin position="46"/>
        <end position="49"/>
    </location>
</feature>
<feature type="strand" evidence="13">
    <location>
        <begin position="53"/>
        <end position="57"/>
    </location>
</feature>
<feature type="helix" evidence="13">
    <location>
        <begin position="58"/>
        <end position="66"/>
    </location>
</feature>
<feature type="strand" evidence="13">
    <location>
        <begin position="70"/>
        <end position="74"/>
    </location>
</feature>
<feature type="helix" evidence="13">
    <location>
        <begin position="80"/>
        <end position="89"/>
    </location>
</feature>
<feature type="strand" evidence="13">
    <location>
        <begin position="90"/>
        <end position="95"/>
    </location>
</feature>
<feature type="turn" evidence="13">
    <location>
        <begin position="102"/>
        <end position="104"/>
    </location>
</feature>
<feature type="helix" evidence="13">
    <location>
        <begin position="106"/>
        <end position="123"/>
    </location>
</feature>
<feature type="strand" evidence="13">
    <location>
        <begin position="130"/>
        <end position="133"/>
    </location>
</feature>
<feature type="helix" evidence="13">
    <location>
        <begin position="135"/>
        <end position="145"/>
    </location>
</feature>
<feature type="strand" evidence="13">
    <location>
        <begin position="151"/>
        <end position="160"/>
    </location>
</feature>
<feature type="turn" evidence="13">
    <location>
        <begin position="167"/>
        <end position="170"/>
    </location>
</feature>
<feature type="turn" evidence="13">
    <location>
        <begin position="173"/>
        <end position="176"/>
    </location>
</feature>
<feature type="helix" evidence="13">
    <location>
        <begin position="179"/>
        <end position="187"/>
    </location>
</feature>
<feature type="strand" evidence="13">
    <location>
        <begin position="191"/>
        <end position="198"/>
    </location>
</feature>
<feature type="helix" evidence="13">
    <location>
        <begin position="201"/>
        <end position="205"/>
    </location>
</feature>
<feature type="helix" evidence="13">
    <location>
        <begin position="208"/>
        <end position="213"/>
    </location>
</feature>
<feature type="strand" evidence="13">
    <location>
        <begin position="214"/>
        <end position="224"/>
    </location>
</feature>
<feature type="strand" evidence="13">
    <location>
        <begin position="226"/>
        <end position="236"/>
    </location>
</feature>
<feature type="strand" evidence="13">
    <location>
        <begin position="238"/>
        <end position="243"/>
    </location>
</feature>
<feature type="helix" evidence="13">
    <location>
        <begin position="247"/>
        <end position="250"/>
    </location>
</feature>
<feature type="helix" evidence="13">
    <location>
        <begin position="262"/>
        <end position="279"/>
    </location>
</feature>
<feature type="helix" evidence="13">
    <location>
        <begin position="289"/>
        <end position="295"/>
    </location>
</feature>
<feature type="helix" evidence="13">
    <location>
        <begin position="297"/>
        <end position="299"/>
    </location>
</feature>
<feature type="turn" evidence="13">
    <location>
        <begin position="306"/>
        <end position="308"/>
    </location>
</feature>
<feature type="strand" evidence="13">
    <location>
        <begin position="312"/>
        <end position="317"/>
    </location>
</feature>
<gene>
    <name evidence="12" type="primary">GGH</name>
</gene>
<dbReference type="EC" id="3.4.19.9" evidence="5 9"/>
<dbReference type="EMBL" id="U55206">
    <property type="protein sequence ID" value="AAC05579.1"/>
    <property type="molecule type" value="mRNA"/>
</dbReference>
<dbReference type="EMBL" id="AF147083">
    <property type="protein sequence ID" value="AAF03360.1"/>
    <property type="molecule type" value="Genomic_DNA"/>
</dbReference>
<dbReference type="EMBL" id="AF147081">
    <property type="protein sequence ID" value="AAF03360.1"/>
    <property type="status" value="JOINED"/>
    <property type="molecule type" value="Genomic_DNA"/>
</dbReference>
<dbReference type="EMBL" id="AF147082">
    <property type="protein sequence ID" value="AAF03360.1"/>
    <property type="status" value="JOINED"/>
    <property type="molecule type" value="Genomic_DNA"/>
</dbReference>
<dbReference type="EMBL" id="BC025025">
    <property type="protein sequence ID" value="AAH25025.1"/>
    <property type="molecule type" value="mRNA"/>
</dbReference>
<dbReference type="CCDS" id="CCDS6177.1"/>
<dbReference type="PIR" id="JC6115">
    <property type="entry name" value="JC6115"/>
</dbReference>
<dbReference type="RefSeq" id="NP_003869.1">
    <property type="nucleotide sequence ID" value="NM_003878.3"/>
</dbReference>
<dbReference type="PDB" id="1L9X">
    <property type="method" value="X-ray"/>
    <property type="resolution" value="1.60 A"/>
    <property type="chains" value="A/B/C/D=25-318"/>
</dbReference>
<dbReference type="PDBsum" id="1L9X"/>
<dbReference type="SMR" id="Q92820"/>
<dbReference type="BioGRID" id="114363">
    <property type="interactions" value="274"/>
</dbReference>
<dbReference type="FunCoup" id="Q92820">
    <property type="interactions" value="624"/>
</dbReference>
<dbReference type="IntAct" id="Q92820">
    <property type="interactions" value="197"/>
</dbReference>
<dbReference type="MINT" id="Q92820"/>
<dbReference type="STRING" id="9606.ENSP00000260118"/>
<dbReference type="BindingDB" id="Q92820"/>
<dbReference type="ChEMBL" id="CHEMBL2223"/>
<dbReference type="DrugBank" id="DB00158">
    <property type="generic name" value="Folic acid"/>
</dbReference>
<dbReference type="DrugBank" id="DB00563">
    <property type="generic name" value="Methotrexate"/>
</dbReference>
<dbReference type="MEROPS" id="C26.001"/>
<dbReference type="GlyConnect" id="1257">
    <property type="glycosylation" value="26 N-Linked glycans (4 sites)"/>
</dbReference>
<dbReference type="GlyCosmos" id="Q92820">
    <property type="glycosylation" value="4 sites, 27 glycans"/>
</dbReference>
<dbReference type="GlyGen" id="Q92820">
    <property type="glycosylation" value="6 sites, 51 N-linked glycans (4 sites), 1 N-linked;o-linked glycan (1 site), 1 O-linked glycan (1 site)"/>
</dbReference>
<dbReference type="iPTMnet" id="Q92820"/>
<dbReference type="PhosphoSitePlus" id="Q92820"/>
<dbReference type="SwissPalm" id="Q92820"/>
<dbReference type="BioMuta" id="GGH"/>
<dbReference type="DMDM" id="6016127"/>
<dbReference type="jPOST" id="Q92820"/>
<dbReference type="MassIVE" id="Q92820"/>
<dbReference type="PaxDb" id="9606-ENSP00000260118"/>
<dbReference type="PeptideAtlas" id="Q92820"/>
<dbReference type="PRIDE" id="Q92820"/>
<dbReference type="ProteomicsDB" id="75496"/>
<dbReference type="Pumba" id="Q92820"/>
<dbReference type="Antibodypedia" id="4517">
    <property type="antibodies" value="317 antibodies from 31 providers"/>
</dbReference>
<dbReference type="DNASU" id="8836"/>
<dbReference type="Ensembl" id="ENST00000260118.7">
    <property type="protein sequence ID" value="ENSP00000260118.6"/>
    <property type="gene ID" value="ENSG00000137563.13"/>
</dbReference>
<dbReference type="GeneID" id="8836"/>
<dbReference type="KEGG" id="hsa:8836"/>
<dbReference type="MANE-Select" id="ENST00000260118.7">
    <property type="protein sequence ID" value="ENSP00000260118.6"/>
    <property type="RefSeq nucleotide sequence ID" value="NM_003878.3"/>
    <property type="RefSeq protein sequence ID" value="NP_003869.1"/>
</dbReference>
<dbReference type="UCSC" id="uc003xuw.4">
    <property type="organism name" value="human"/>
</dbReference>
<dbReference type="AGR" id="HGNC:4248"/>
<dbReference type="CTD" id="8836"/>
<dbReference type="DisGeNET" id="8836"/>
<dbReference type="GeneCards" id="GGH"/>
<dbReference type="HGNC" id="HGNC:4248">
    <property type="gene designation" value="GGH"/>
</dbReference>
<dbReference type="HPA" id="ENSG00000137563">
    <property type="expression patterns" value="Tissue enhanced (kidney, liver)"/>
</dbReference>
<dbReference type="MIM" id="601509">
    <property type="type" value="gene"/>
</dbReference>
<dbReference type="neXtProt" id="NX_Q92820"/>
<dbReference type="OpenTargets" id="ENSG00000137563"/>
<dbReference type="PharmGKB" id="PA432"/>
<dbReference type="VEuPathDB" id="HostDB:ENSG00000137563"/>
<dbReference type="eggNOG" id="KOG1559">
    <property type="taxonomic scope" value="Eukaryota"/>
</dbReference>
<dbReference type="GeneTree" id="ENSGT00490000043388"/>
<dbReference type="HOGENOM" id="CLU_058704_1_1_1"/>
<dbReference type="InParanoid" id="Q92820"/>
<dbReference type="OMA" id="EPVSSHF"/>
<dbReference type="OrthoDB" id="64220at2759"/>
<dbReference type="PAN-GO" id="Q92820">
    <property type="GO annotations" value="3 GO annotations based on evolutionary models"/>
</dbReference>
<dbReference type="PhylomeDB" id="Q92820"/>
<dbReference type="TreeFam" id="TF323437"/>
<dbReference type="BRENDA" id="3.4.19.9">
    <property type="organism ID" value="2681"/>
</dbReference>
<dbReference type="PathwayCommons" id="Q92820"/>
<dbReference type="Reactome" id="R-HSA-6798695">
    <property type="pathway name" value="Neutrophil degranulation"/>
</dbReference>
<dbReference type="SignaLink" id="Q92820"/>
<dbReference type="SIGNOR" id="Q92820"/>
<dbReference type="BioGRID-ORCS" id="8836">
    <property type="hits" value="16 hits in 1163 CRISPR screens"/>
</dbReference>
<dbReference type="ChiTaRS" id="GGH">
    <property type="organism name" value="human"/>
</dbReference>
<dbReference type="EvolutionaryTrace" id="Q92820"/>
<dbReference type="GeneWiki" id="GGH_(gene)"/>
<dbReference type="GenomeRNAi" id="8836"/>
<dbReference type="Pharos" id="Q92820">
    <property type="development level" value="Tchem"/>
</dbReference>
<dbReference type="PRO" id="PR:Q92820"/>
<dbReference type="Proteomes" id="UP000005640">
    <property type="component" value="Chromosome 8"/>
</dbReference>
<dbReference type="RNAct" id="Q92820">
    <property type="molecule type" value="protein"/>
</dbReference>
<dbReference type="Bgee" id="ENSG00000137563">
    <property type="expression patterns" value="Expressed in rectum and 188 other cell types or tissues"/>
</dbReference>
<dbReference type="GO" id="GO:0035578">
    <property type="term" value="C:azurophil granule lumen"/>
    <property type="evidence" value="ECO:0000304"/>
    <property type="project" value="Reactome"/>
</dbReference>
<dbReference type="GO" id="GO:0070062">
    <property type="term" value="C:extracellular exosome"/>
    <property type="evidence" value="ECO:0007005"/>
    <property type="project" value="UniProtKB"/>
</dbReference>
<dbReference type="GO" id="GO:0005576">
    <property type="term" value="C:extracellular region"/>
    <property type="evidence" value="ECO:0000304"/>
    <property type="project" value="Reactome"/>
</dbReference>
<dbReference type="GO" id="GO:0005615">
    <property type="term" value="C:extracellular space"/>
    <property type="evidence" value="ECO:0000314"/>
    <property type="project" value="UniProtKB"/>
</dbReference>
<dbReference type="GO" id="GO:0042470">
    <property type="term" value="C:melanosome"/>
    <property type="evidence" value="ECO:0007669"/>
    <property type="project" value="UniProtKB-SubCell"/>
</dbReference>
<dbReference type="GO" id="GO:0005634">
    <property type="term" value="C:nucleus"/>
    <property type="evidence" value="ECO:0007005"/>
    <property type="project" value="UniProtKB"/>
</dbReference>
<dbReference type="GO" id="GO:0035580">
    <property type="term" value="C:specific granule lumen"/>
    <property type="evidence" value="ECO:0000304"/>
    <property type="project" value="Reactome"/>
</dbReference>
<dbReference type="GO" id="GO:1904724">
    <property type="term" value="C:tertiary granule lumen"/>
    <property type="evidence" value="ECO:0000304"/>
    <property type="project" value="Reactome"/>
</dbReference>
<dbReference type="GO" id="GO:0005773">
    <property type="term" value="C:vacuole"/>
    <property type="evidence" value="ECO:0000318"/>
    <property type="project" value="GO_Central"/>
</dbReference>
<dbReference type="GO" id="GO:0008238">
    <property type="term" value="F:exopeptidase activity"/>
    <property type="evidence" value="ECO:0000304"/>
    <property type="project" value="ProtInc"/>
</dbReference>
<dbReference type="GO" id="GO:0034722">
    <property type="term" value="F:gamma-glutamyl-peptidase activity"/>
    <property type="evidence" value="ECO:0000314"/>
    <property type="project" value="UniProtKB"/>
</dbReference>
<dbReference type="GO" id="GO:0008242">
    <property type="term" value="F:omega peptidase activity"/>
    <property type="evidence" value="ECO:0000304"/>
    <property type="project" value="ProtInc"/>
</dbReference>
<dbReference type="GO" id="GO:0046900">
    <property type="term" value="P:tetrahydrofolylpolyglutamate metabolic process"/>
    <property type="evidence" value="ECO:0000318"/>
    <property type="project" value="GO_Central"/>
</dbReference>
<dbReference type="CDD" id="cd01747">
    <property type="entry name" value="GATase1_Glutamyl_Hydrolase"/>
    <property type="match status" value="1"/>
</dbReference>
<dbReference type="FunFam" id="3.40.50.880:FF:000024">
    <property type="entry name" value="Folate gamma-glutamyl hydrolase"/>
    <property type="match status" value="1"/>
</dbReference>
<dbReference type="Gene3D" id="3.40.50.880">
    <property type="match status" value="1"/>
</dbReference>
<dbReference type="InterPro" id="IPR029062">
    <property type="entry name" value="Class_I_gatase-like"/>
</dbReference>
<dbReference type="InterPro" id="IPR015527">
    <property type="entry name" value="Pept_C26_g-glut_hydrolase"/>
</dbReference>
<dbReference type="InterPro" id="IPR011697">
    <property type="entry name" value="Peptidase_C26"/>
</dbReference>
<dbReference type="PANTHER" id="PTHR11315:SF20">
    <property type="entry name" value="GAMMA-GLUTAMYL HYDROLASE"/>
    <property type="match status" value="1"/>
</dbReference>
<dbReference type="PANTHER" id="PTHR11315">
    <property type="entry name" value="PROTEASE FAMILY C26 GAMMA-GLUTAMYL HYDROLASE"/>
    <property type="match status" value="1"/>
</dbReference>
<dbReference type="Pfam" id="PF07722">
    <property type="entry name" value="Peptidase_C26"/>
    <property type="match status" value="1"/>
</dbReference>
<dbReference type="SUPFAM" id="SSF52317">
    <property type="entry name" value="Class I glutamine amidotransferase-like"/>
    <property type="match status" value="1"/>
</dbReference>
<dbReference type="PROSITE" id="PS51275">
    <property type="entry name" value="PEPTIDASE_C26_GGH"/>
    <property type="match status" value="1"/>
</dbReference>
<organism>
    <name type="scientific">Homo sapiens</name>
    <name type="common">Human</name>
    <dbReference type="NCBI Taxonomy" id="9606"/>
    <lineage>
        <taxon>Eukaryota</taxon>
        <taxon>Metazoa</taxon>
        <taxon>Chordata</taxon>
        <taxon>Craniata</taxon>
        <taxon>Vertebrata</taxon>
        <taxon>Euteleostomi</taxon>
        <taxon>Mammalia</taxon>
        <taxon>Eutheria</taxon>
        <taxon>Euarchontoglires</taxon>
        <taxon>Primates</taxon>
        <taxon>Haplorrhini</taxon>
        <taxon>Catarrhini</taxon>
        <taxon>Hominidae</taxon>
        <taxon>Homo</taxon>
    </lineage>
</organism>
<reference key="1">
    <citation type="journal article" date="1996" name="Proc. Natl. Acad. Sci. U.S.A.">
        <title>Human gamma-glutamyl hydrolase: cloning and characterization of the enzyme expressed in vitro.</title>
        <authorList>
            <person name="Yao R."/>
            <person name="Schneider E."/>
            <person name="Ryan T.J."/>
            <person name="Galivan J."/>
        </authorList>
    </citation>
    <scope>NUCLEOTIDE SEQUENCE [MRNA]</scope>
    <scope>FUNCTION</scope>
    <scope>CATALYTIC ACTIVITY</scope>
</reference>
<reference key="2">
    <citation type="journal article" date="1999" name="Gene">
        <title>Structural organization of the human gamma-glutamyl hydrolase gene.</title>
        <authorList>
            <person name="Yin D."/>
            <person name="Chave K.J."/>
            <person name="Macaluso C.R."/>
            <person name="Galivan J."/>
            <person name="Yao R."/>
        </authorList>
    </citation>
    <scope>NUCLEOTIDE SEQUENCE [GENOMIC DNA]</scope>
</reference>
<reference key="3">
    <citation type="journal article" date="2004" name="Genome Res.">
        <title>The status, quality, and expansion of the NIH full-length cDNA project: the Mammalian Gene Collection (MGC).</title>
        <authorList>
            <consortium name="The MGC Project Team"/>
        </authorList>
    </citation>
    <scope>NUCLEOTIDE SEQUENCE [LARGE SCALE MRNA]</scope>
    <source>
        <tissue>Skin</tissue>
    </source>
</reference>
<reference key="4">
    <citation type="journal article" date="1999" name="Biochem. J.">
        <title>Site-directed mutagenesis establishes cysteine-110 as essential for enzyme activity in human gamma-glutamyl hydrolase.</title>
        <authorList>
            <person name="Chave K.J."/>
            <person name="Galivan J."/>
            <person name="Ryan T.J."/>
        </authorList>
    </citation>
    <scope>MUTAGENESIS OF CYS-134</scope>
</reference>
<reference key="5">
    <citation type="journal article" date="2000" name="J. Biol. Chem.">
        <title>Molecular modeling and site-directed mutagenesis define the catalytic motif in human gamma -glutamyl hydrolase.</title>
        <authorList>
            <person name="Chave K.J."/>
            <person name="Auger I.E."/>
            <person name="Galivan J."/>
            <person name="Ryan T.J."/>
        </authorList>
    </citation>
    <scope>FUNCTION</scope>
    <scope>CATALYTIC ACTIVITY</scope>
    <scope>BIOPHYSICOCHEMICAL PROPERTIES</scope>
    <scope>MUTAGENESIS OF CYS-134; HIS-244 AND GLU-246</scope>
    <scope>3D-STRUCTURE MODELING</scope>
</reference>
<reference key="6">
    <citation type="journal article" date="2003" name="J. Proteome Res.">
        <title>Proteomic analysis of early melanosomes: identification of novel melanosomal proteins.</title>
        <authorList>
            <person name="Basrur V."/>
            <person name="Yang F."/>
            <person name="Kushimoto T."/>
            <person name="Higashimoto Y."/>
            <person name="Yasumoto K."/>
            <person name="Valencia J."/>
            <person name="Muller J."/>
            <person name="Vieira W.D."/>
            <person name="Watabe H."/>
            <person name="Shabanowitz J."/>
            <person name="Hearing V.J."/>
            <person name="Hunt D.F."/>
            <person name="Appella E."/>
        </authorList>
    </citation>
    <scope>SUBCELLULAR LOCATION [LARGE SCALE ANALYSIS]</scope>
    <source>
        <tissue>Melanoma</tissue>
    </source>
</reference>
<reference key="7">
    <citation type="journal article" date="2006" name="Biochim. Biophys. Acta">
        <title>Characterization of human gamma-glutamyl hydrolase in solution demonstrates that the enzyme is a non-dissociating homodimer.</title>
        <authorList>
            <person name="Eisele L.E."/>
            <person name="Chave K.J."/>
            <person name="Lehning A.C."/>
            <person name="Ryan T.J."/>
        </authorList>
    </citation>
    <scope>SUBUNIT</scope>
</reference>
<reference key="8">
    <citation type="journal article" date="2006" name="J. Proteome Res.">
        <title>Proteomic and bioinformatic characterization of the biogenesis and function of melanosomes.</title>
        <authorList>
            <person name="Chi A."/>
            <person name="Valencia J.C."/>
            <person name="Hu Z.-Z."/>
            <person name="Watabe H."/>
            <person name="Yamaguchi H."/>
            <person name="Mangini N.J."/>
            <person name="Huang H."/>
            <person name="Canfield V.A."/>
            <person name="Cheng K.C."/>
            <person name="Yang F."/>
            <person name="Abe R."/>
            <person name="Yamagishi S."/>
            <person name="Shabanowitz J."/>
            <person name="Hearing V.J."/>
            <person name="Wu C."/>
            <person name="Appella E."/>
            <person name="Hunt D.F."/>
        </authorList>
    </citation>
    <scope>SUBCELLULAR LOCATION [LARGE SCALE ANALYSIS]</scope>
    <source>
        <tissue>Melanoma</tissue>
    </source>
</reference>
<reference key="9">
    <citation type="journal article" date="2011" name="BMC Syst. Biol.">
        <title>Initial characterization of the human central proteome.</title>
        <authorList>
            <person name="Burkard T.R."/>
            <person name="Planyavsky M."/>
            <person name="Kaupe I."/>
            <person name="Breitwieser F.P."/>
            <person name="Buerckstuemmer T."/>
            <person name="Bennett K.L."/>
            <person name="Superti-Furga G."/>
            <person name="Colinge J."/>
        </authorList>
    </citation>
    <scope>IDENTIFICATION BY MASS SPECTROMETRY [LARGE SCALE ANALYSIS]</scope>
</reference>
<reference key="10">
    <citation type="journal article" date="2014" name="J. Proteomics">
        <title>An enzyme assisted RP-RPLC approach for in-depth analysis of human liver phosphoproteome.</title>
        <authorList>
            <person name="Bian Y."/>
            <person name="Song C."/>
            <person name="Cheng K."/>
            <person name="Dong M."/>
            <person name="Wang F."/>
            <person name="Huang J."/>
            <person name="Sun D."/>
            <person name="Wang L."/>
            <person name="Ye M."/>
            <person name="Zou H."/>
        </authorList>
    </citation>
    <scope>IDENTIFICATION BY MASS SPECTROMETRY [LARGE SCALE ANALYSIS]</scope>
    <source>
        <tissue>Liver</tissue>
    </source>
</reference>
<reference key="11">
    <citation type="journal article" date="2002" name="J. Biol. Chem.">
        <title>Three-dimensional structure of human gamma -glutamyl hydrolase. A class I glutamine amidotransferase adapted for a complex substate.</title>
        <authorList>
            <person name="Li H."/>
            <person name="Ryan T.J."/>
            <person name="Chave K.J."/>
            <person name="Van Roey P."/>
        </authorList>
    </citation>
    <scope>X-RAY CRYSTALLOGRAPHY (1.60 ANGSTROMS) OF 25-318</scope>
    <scope>IDENTIFICATION BY MASS SPECTROMETRY</scope>
    <scope>GLYCOSYLATION AT ASN-163; ASN-203 AND ASN-307</scope>
    <scope>SUBUNIT</scope>
</reference>
<evidence type="ECO:0000250" key="1">
    <source>
        <dbReference type="UniProtKB" id="Q62867"/>
    </source>
</evidence>
<evidence type="ECO:0000255" key="2"/>
<evidence type="ECO:0000255" key="3">
    <source>
        <dbReference type="PROSITE-ProRule" id="PRU00607"/>
    </source>
</evidence>
<evidence type="ECO:0000269" key="4">
    <source>
    </source>
</evidence>
<evidence type="ECO:0000269" key="5">
    <source>
    </source>
</evidence>
<evidence type="ECO:0000269" key="6">
    <source>
    </source>
</evidence>
<evidence type="ECO:0000269" key="7">
    <source>
    </source>
</evidence>
<evidence type="ECO:0000269" key="8">
    <source>
    </source>
</evidence>
<evidence type="ECO:0000269" key="9">
    <source>
    </source>
</evidence>
<evidence type="ECO:0000305" key="10"/>
<evidence type="ECO:0000305" key="11">
    <source>
    </source>
</evidence>
<evidence type="ECO:0000312" key="12">
    <source>
        <dbReference type="HGNC" id="HGNC:4248"/>
    </source>
</evidence>
<evidence type="ECO:0007829" key="13">
    <source>
        <dbReference type="PDB" id="1L9X"/>
    </source>
</evidence>
<protein>
    <recommendedName>
        <fullName evidence="10">Gamma-glutamyl hydrolase</fullName>
        <ecNumber evidence="5 9">3.4.19.9</ecNumber>
    </recommendedName>
    <alternativeName>
        <fullName>Conjugase</fullName>
    </alternativeName>
    <alternativeName>
        <fullName>GH</fullName>
    </alternativeName>
    <alternativeName>
        <fullName>Gamma-Glu-X carboxypeptidase</fullName>
    </alternativeName>
</protein>
<sequence>MASPGCLLCVLGLLLCGAASLELSRPHGDTAKKPIIGILMQKCRNKVMKNYGRYYIAASYVKYLESAGARVVPVRLDLTEKDYEILFKSINGILFPGGSVDLRRSDYAKVAKIFYNLSIQSFDDGDYFPVWGTCLGFEELSLLISGECLLTATDTVDVAMPLNFTGGQLHSRMFQNFPTELLLSLAVEPLTANFHKWSLSVKNFTMNEKLKKFFNVLTTNTDGKIEFISTMEGYKYPVYGVQWHPEKAPYEWKNLDGISHAPNAVKTAFYLAEFFVNEARKNNHHFKSESEEEKALIYQFSPIYTGNISSFQQCYIFD</sequence>
<name>GGH_HUMAN</name>